<reference key="1">
    <citation type="journal article" date="2010" name="PLoS ONE">
        <title>Genome sequence of Cronobacter sakazakii BAA-894 and comparative genomic hybridization analysis with other Cronobacter species.</title>
        <authorList>
            <person name="Kucerova E."/>
            <person name="Clifton S.W."/>
            <person name="Xia X.Q."/>
            <person name="Long F."/>
            <person name="Porwollik S."/>
            <person name="Fulton L."/>
            <person name="Fronick C."/>
            <person name="Minx P."/>
            <person name="Kyung K."/>
            <person name="Warren W."/>
            <person name="Fulton R."/>
            <person name="Feng D."/>
            <person name="Wollam A."/>
            <person name="Shah N."/>
            <person name="Bhonagiri V."/>
            <person name="Nash W.E."/>
            <person name="Hallsworth-Pepin K."/>
            <person name="Wilson R.K."/>
            <person name="McClelland M."/>
            <person name="Forsythe S.J."/>
        </authorList>
    </citation>
    <scope>NUCLEOTIDE SEQUENCE [LARGE SCALE GENOMIC DNA]</scope>
    <source>
        <strain>ATCC BAA-894</strain>
    </source>
</reference>
<comment type="catalytic activity">
    <reaction evidence="1">
        <text>D-glucose + ATP = D-glucose 6-phosphate + ADP + H(+)</text>
        <dbReference type="Rhea" id="RHEA:17825"/>
        <dbReference type="ChEBI" id="CHEBI:4167"/>
        <dbReference type="ChEBI" id="CHEBI:15378"/>
        <dbReference type="ChEBI" id="CHEBI:30616"/>
        <dbReference type="ChEBI" id="CHEBI:61548"/>
        <dbReference type="ChEBI" id="CHEBI:456216"/>
        <dbReference type="EC" id="2.7.1.2"/>
    </reaction>
</comment>
<comment type="subcellular location">
    <subcellularLocation>
        <location evidence="1">Cytoplasm</location>
    </subcellularLocation>
</comment>
<comment type="similarity">
    <text evidence="1">Belongs to the bacterial glucokinase family.</text>
</comment>
<organism>
    <name type="scientific">Cronobacter sakazakii (strain ATCC BAA-894)</name>
    <name type="common">Enterobacter sakazakii</name>
    <dbReference type="NCBI Taxonomy" id="290339"/>
    <lineage>
        <taxon>Bacteria</taxon>
        <taxon>Pseudomonadati</taxon>
        <taxon>Pseudomonadota</taxon>
        <taxon>Gammaproteobacteria</taxon>
        <taxon>Enterobacterales</taxon>
        <taxon>Enterobacteriaceae</taxon>
        <taxon>Cronobacter</taxon>
    </lineage>
</organism>
<evidence type="ECO:0000255" key="1">
    <source>
        <dbReference type="HAMAP-Rule" id="MF_00524"/>
    </source>
</evidence>
<accession>A7MP52</accession>
<sequence>MTKYALVGDVGGTNARLALCDVDSGEILKAKTYSGLDYPSLEAVVRVYLEEHNATVTDGCIAIACPITGDWVAMTNHVWAFSVAEMKKNLGFDHLEIINDFTAVSMAIPMLKTDHLIQFGGGEPQPNKPIAVYGAGTGLGVAHLVHVDKRWVSLPGEGGHVDFAPNSEEEAIILEQLRAEVGHVSAERVLSGPGLVNLYRAIVKADGRLPDNLRPKDITERALDDSCTDCRRALSLFCVIMGRFGGNLALTLGTFGGVYIAGGIVPRFLDFFTSSGFRGGFEDKGRFKSYVQDIPVYLIVHDQPGLLGAGAHLRQTLGQIL</sequence>
<proteinExistence type="inferred from homology"/>
<name>GLK_CROS8</name>
<keyword id="KW-0067">ATP-binding</keyword>
<keyword id="KW-0963">Cytoplasm</keyword>
<keyword id="KW-0324">Glycolysis</keyword>
<keyword id="KW-0418">Kinase</keyword>
<keyword id="KW-0547">Nucleotide-binding</keyword>
<keyword id="KW-1185">Reference proteome</keyword>
<keyword id="KW-0808">Transferase</keyword>
<feature type="chain" id="PRO_1000050968" description="Glucokinase">
    <location>
        <begin position="1"/>
        <end position="321"/>
    </location>
</feature>
<feature type="binding site" evidence="1">
    <location>
        <begin position="8"/>
        <end position="13"/>
    </location>
    <ligand>
        <name>ATP</name>
        <dbReference type="ChEBI" id="CHEBI:30616"/>
    </ligand>
</feature>
<gene>
    <name evidence="1" type="primary">glk</name>
    <name type="ordered locus">ESA_00852</name>
</gene>
<dbReference type="EC" id="2.7.1.2" evidence="1"/>
<dbReference type="EMBL" id="CP000783">
    <property type="protein sequence ID" value="ABU76123.1"/>
    <property type="molecule type" value="Genomic_DNA"/>
</dbReference>
<dbReference type="RefSeq" id="WP_004388531.1">
    <property type="nucleotide sequence ID" value="NC_009778.1"/>
</dbReference>
<dbReference type="SMR" id="A7MP52"/>
<dbReference type="KEGG" id="esa:ESA_00852"/>
<dbReference type="PATRIC" id="fig|290339.8.peg.755"/>
<dbReference type="HOGENOM" id="CLU_042582_1_0_6"/>
<dbReference type="Proteomes" id="UP000000260">
    <property type="component" value="Chromosome"/>
</dbReference>
<dbReference type="GO" id="GO:0005829">
    <property type="term" value="C:cytosol"/>
    <property type="evidence" value="ECO:0007669"/>
    <property type="project" value="TreeGrafter"/>
</dbReference>
<dbReference type="GO" id="GO:0005524">
    <property type="term" value="F:ATP binding"/>
    <property type="evidence" value="ECO:0007669"/>
    <property type="project" value="UniProtKB-UniRule"/>
</dbReference>
<dbReference type="GO" id="GO:0005536">
    <property type="term" value="F:D-glucose binding"/>
    <property type="evidence" value="ECO:0007669"/>
    <property type="project" value="InterPro"/>
</dbReference>
<dbReference type="GO" id="GO:0004340">
    <property type="term" value="F:glucokinase activity"/>
    <property type="evidence" value="ECO:0007669"/>
    <property type="project" value="UniProtKB-UniRule"/>
</dbReference>
<dbReference type="GO" id="GO:0006096">
    <property type="term" value="P:glycolytic process"/>
    <property type="evidence" value="ECO:0007669"/>
    <property type="project" value="UniProtKB-UniRule"/>
</dbReference>
<dbReference type="CDD" id="cd24008">
    <property type="entry name" value="ASKHA_NBD_GLK"/>
    <property type="match status" value="1"/>
</dbReference>
<dbReference type="FunFam" id="3.30.420.40:FF:000045">
    <property type="entry name" value="Glucokinase"/>
    <property type="match status" value="1"/>
</dbReference>
<dbReference type="FunFam" id="3.40.367.20:FF:000002">
    <property type="entry name" value="Glucokinase"/>
    <property type="match status" value="1"/>
</dbReference>
<dbReference type="Gene3D" id="3.30.420.40">
    <property type="match status" value="1"/>
</dbReference>
<dbReference type="Gene3D" id="3.40.367.20">
    <property type="match status" value="1"/>
</dbReference>
<dbReference type="HAMAP" id="MF_00524">
    <property type="entry name" value="Glucokinase"/>
    <property type="match status" value="1"/>
</dbReference>
<dbReference type="InterPro" id="IPR043129">
    <property type="entry name" value="ATPase_NBD"/>
</dbReference>
<dbReference type="InterPro" id="IPR050201">
    <property type="entry name" value="Bacterial_glucokinase"/>
</dbReference>
<dbReference type="InterPro" id="IPR003836">
    <property type="entry name" value="Glucokinase"/>
</dbReference>
<dbReference type="NCBIfam" id="TIGR00749">
    <property type="entry name" value="glk"/>
    <property type="match status" value="1"/>
</dbReference>
<dbReference type="NCBIfam" id="NF001414">
    <property type="entry name" value="PRK00292.1-1"/>
    <property type="match status" value="1"/>
</dbReference>
<dbReference type="NCBIfam" id="NF001416">
    <property type="entry name" value="PRK00292.1-3"/>
    <property type="match status" value="1"/>
</dbReference>
<dbReference type="NCBIfam" id="NF009073">
    <property type="entry name" value="PRK12408.1"/>
    <property type="match status" value="1"/>
</dbReference>
<dbReference type="PANTHER" id="PTHR47690">
    <property type="entry name" value="GLUCOKINASE"/>
    <property type="match status" value="1"/>
</dbReference>
<dbReference type="PANTHER" id="PTHR47690:SF1">
    <property type="entry name" value="GLUCOKINASE"/>
    <property type="match status" value="1"/>
</dbReference>
<dbReference type="Pfam" id="PF02685">
    <property type="entry name" value="Glucokinase"/>
    <property type="match status" value="1"/>
</dbReference>
<dbReference type="SUPFAM" id="SSF53067">
    <property type="entry name" value="Actin-like ATPase domain"/>
    <property type="match status" value="1"/>
</dbReference>
<protein>
    <recommendedName>
        <fullName evidence="1">Glucokinase</fullName>
        <ecNumber evidence="1">2.7.1.2</ecNumber>
    </recommendedName>
    <alternativeName>
        <fullName evidence="1">Glucose kinase</fullName>
    </alternativeName>
</protein>